<comment type="function">
    <text evidence="2">Gating-modifier toxin that inhibits both sodium (Nav) and calcium (Cav3) channels by inducing hyperpolarizing shift in voltage-dependence of activation and steady state inactivation. Inhibits Nav1.1/SCN1A, Nav1.2/SCN2A, Nav1.3/SCN3A, Nav1.6/SCN6A, Nav1.7/SCN9A and Cav3.1/CACNA1G sodium and calcium channels at nanomolar concentrations (IC(50)=81-301 nM). Surprisingly, selectively slows fast inactivation of Nav1.3/SCN3A. Also shows moderate inhibition of Cav3.2/CACNA1H calcium channels (IC(50)=1233 nM). Ex vivo, nearly ablates neuronal mechanosensitivity in afferent fibers innervating the colon and the bladder. In vivo, in a mouse model of irritable bowel syndrome, intracolonic administration of the toxin reverses colonic mechanical hypersensitivity.</text>
</comment>
<comment type="subcellular location">
    <subcellularLocation>
        <location evidence="2">Secreted</location>
    </subcellularLocation>
</comment>
<comment type="tissue specificity">
    <text evidence="5">Expressed by the venom gland.</text>
</comment>
<comment type="domain">
    <text evidence="1">The presence of a 'disulfide through disulfide knot' structurally defines this protein as a knottin.</text>
</comment>
<comment type="mass spectrometry">
    <text>Monoisotopic mass.</text>
</comment>
<comment type="pharmaceutical">
    <text evidence="2">Could be a potential drug lead to treat chronic visceral pain.</text>
</comment>
<comment type="miscellaneous">
    <text evidence="2">Negative results: shows no or weak activity on Nav1.4/SCN4A, Nav1.5/SCN5A, and Cav3.3/CACNA1I sodium and calcium channels.</text>
</comment>
<comment type="similarity">
    <text evidence="4">Belongs to the neurotoxin 10 (Hwtx-1) family. 59 (Tltx) subfamily.</text>
</comment>
<accession>P0DQO3</accession>
<evidence type="ECO:0000250" key="1">
    <source>
        <dbReference type="UniProtKB" id="P58426"/>
    </source>
</evidence>
<evidence type="ECO:0000269" key="2">
    <source>
    </source>
</evidence>
<evidence type="ECO:0000303" key="3">
    <source>
    </source>
</evidence>
<evidence type="ECO:0000305" key="4"/>
<evidence type="ECO:0000305" key="5">
    <source>
    </source>
</evidence>
<sequence>DDCLGMFSSCDPNNDKCCPNRKCSRKDQWCKYQLW</sequence>
<keyword id="KW-0108">Calcium channel impairing toxin</keyword>
<keyword id="KW-0903">Direct protein sequencing</keyword>
<keyword id="KW-1015">Disulfide bond</keyword>
<keyword id="KW-0872">Ion channel impairing toxin</keyword>
<keyword id="KW-0960">Knottin</keyword>
<keyword id="KW-0528">Neurotoxin</keyword>
<keyword id="KW-0582">Pharmaceutical</keyword>
<keyword id="KW-0964">Secreted</keyword>
<keyword id="KW-0800">Toxin</keyword>
<keyword id="KW-1218">Voltage-gated calcium channel impairing toxin</keyword>
<keyword id="KW-0738">Voltage-gated sodium channel impairing toxin</keyword>
<name>TAP1A_THEAO</name>
<proteinExistence type="evidence at protein level"/>
<feature type="chain" id="PRO_0000451749" description="Mu/omega-theraphotoxin-Tap1a" evidence="2">
    <location>
        <begin position="1"/>
        <end position="35"/>
    </location>
</feature>
<feature type="disulfide bond" evidence="1">
    <location>
        <begin position="3"/>
        <end position="18"/>
    </location>
</feature>
<feature type="disulfide bond" evidence="1">
    <location>
        <begin position="10"/>
        <end position="23"/>
    </location>
</feature>
<feature type="disulfide bond" evidence="1">
    <location>
        <begin position="17"/>
        <end position="30"/>
    </location>
</feature>
<organism>
    <name type="scientific">Theraphosa apophysis</name>
    <name type="common">Goliath pinkfoot tarantula</name>
    <name type="synonym">Pseudotheraphosa apophysis</name>
    <dbReference type="NCBI Taxonomy" id="1956358"/>
    <lineage>
        <taxon>Eukaryota</taxon>
        <taxon>Metazoa</taxon>
        <taxon>Ecdysozoa</taxon>
        <taxon>Arthropoda</taxon>
        <taxon>Chelicerata</taxon>
        <taxon>Arachnida</taxon>
        <taxon>Araneae</taxon>
        <taxon>Mygalomorphae</taxon>
        <taxon>Theraphosidae</taxon>
        <taxon>Theraphosa</taxon>
    </lineage>
</organism>
<reference key="1">
    <citation type="journal article" date="2021" name="Pain">
        <title>A spider-venom peptide with multi-target activity on sodium and calcium channels alleviates chronic visceral pain in a model of irritable bowel syndrome.</title>
        <authorList>
            <person name="Cardoso F.C."/>
            <person name="Castro J."/>
            <person name="Grundy L."/>
            <person name="Schober G."/>
            <person name="Garcia-Caraballo S."/>
            <person name="Zhao T."/>
            <person name="Herzig V."/>
            <person name="King G.F."/>
            <person name="Brierley S.M."/>
            <person name="Lewis R.J."/>
        </authorList>
    </citation>
    <scope>PROTEIN SEQUENCE</scope>
    <scope>SUBCELLULAR LOCATION</scope>
    <scope>3D-STRUCTURE MODELING</scope>
    <scope>RECOMBINANT EXPRESSION</scope>
    <scope>MASS SPECTROMETRY</scope>
    <scope>BIOASSAY</scope>
    <source>
        <tissue>Venom</tissue>
    </source>
</reference>
<dbReference type="SMR" id="P0DQO3"/>
<dbReference type="GO" id="GO:0005576">
    <property type="term" value="C:extracellular region"/>
    <property type="evidence" value="ECO:0007669"/>
    <property type="project" value="UniProtKB-SubCell"/>
</dbReference>
<dbReference type="GO" id="GO:0005246">
    <property type="term" value="F:calcium channel regulator activity"/>
    <property type="evidence" value="ECO:0007669"/>
    <property type="project" value="UniProtKB-KW"/>
</dbReference>
<dbReference type="GO" id="GO:0008200">
    <property type="term" value="F:ion channel inhibitor activity"/>
    <property type="evidence" value="ECO:0007669"/>
    <property type="project" value="InterPro"/>
</dbReference>
<dbReference type="GO" id="GO:0017080">
    <property type="term" value="F:sodium channel regulator activity"/>
    <property type="evidence" value="ECO:0007669"/>
    <property type="project" value="UniProtKB-KW"/>
</dbReference>
<dbReference type="GO" id="GO:0090729">
    <property type="term" value="F:toxin activity"/>
    <property type="evidence" value="ECO:0007669"/>
    <property type="project" value="UniProtKB-KW"/>
</dbReference>
<dbReference type="InterPro" id="IPR011696">
    <property type="entry name" value="Huwentoxin-1"/>
</dbReference>
<dbReference type="Pfam" id="PF07740">
    <property type="entry name" value="Toxin_12"/>
    <property type="match status" value="1"/>
</dbReference>
<dbReference type="SUPFAM" id="SSF57059">
    <property type="entry name" value="omega toxin-like"/>
    <property type="match status" value="1"/>
</dbReference>
<protein>
    <recommendedName>
        <fullName evidence="3">Mu/omega-theraphotoxin-Tap1a</fullName>
        <shortName evidence="3">Mu/omega-TRTX-Tap1a</shortName>
    </recommendedName>
</protein>